<proteinExistence type="evidence at protein level"/>
<keyword id="KW-0002">3D-structure</keyword>
<keyword id="KW-0049">Antioxidant</keyword>
<keyword id="KW-0963">Cytoplasm</keyword>
<keyword id="KW-1015">Disulfide bond</keyword>
<keyword id="KW-0560">Oxidoreductase</keyword>
<keyword id="KW-0575">Peroxidase</keyword>
<keyword id="KW-0676">Redox-active center</keyword>
<keyword id="KW-1185">Reference proteome</keyword>
<accession>Q9Y9L0</accession>
<organism>
    <name type="scientific">Aeropyrum pernix (strain ATCC 700893 / DSM 11879 / JCM 9820 / NBRC 100138 / K1)</name>
    <dbReference type="NCBI Taxonomy" id="272557"/>
    <lineage>
        <taxon>Archaea</taxon>
        <taxon>Thermoproteota</taxon>
        <taxon>Thermoprotei</taxon>
        <taxon>Desulfurococcales</taxon>
        <taxon>Desulfurococcaceae</taxon>
        <taxon>Aeropyrum</taxon>
    </lineage>
</organism>
<name>TDXH_AERPE</name>
<reference key="1">
    <citation type="journal article" date="1999" name="DNA Res.">
        <title>Complete genome sequence of an aerobic hyper-thermophilic crenarchaeon, Aeropyrum pernix K1.</title>
        <authorList>
            <person name="Kawarabayasi Y."/>
            <person name="Hino Y."/>
            <person name="Horikawa H."/>
            <person name="Yamazaki S."/>
            <person name="Haikawa Y."/>
            <person name="Jin-no K."/>
            <person name="Takahashi M."/>
            <person name="Sekine M."/>
            <person name="Baba S."/>
            <person name="Ankai A."/>
            <person name="Kosugi H."/>
            <person name="Hosoyama A."/>
            <person name="Fukui S."/>
            <person name="Nagai Y."/>
            <person name="Nishijima K."/>
            <person name="Nakazawa H."/>
            <person name="Takamiya M."/>
            <person name="Masuda S."/>
            <person name="Funahashi T."/>
            <person name="Tanaka T."/>
            <person name="Kudoh Y."/>
            <person name="Yamazaki J."/>
            <person name="Kushida N."/>
            <person name="Oguchi A."/>
            <person name="Aoki K."/>
            <person name="Kubota K."/>
            <person name="Nakamura Y."/>
            <person name="Nomura N."/>
            <person name="Sako Y."/>
            <person name="Kikuchi H."/>
        </authorList>
    </citation>
    <scope>NUCLEOTIDE SEQUENCE [LARGE SCALE GENOMIC DNA]</scope>
    <source>
        <strain>ATCC 700893 / DSM 11879 / JCM 9820 / NBRC 100138 / K1</strain>
    </source>
</reference>
<reference key="2">
    <citation type="journal article" date="2003" name="J. Biol. Chem.">
        <title>Characterization of novel hexadecameric thioredoxin peroxidase from Aeropyrum pernix K1.</title>
        <authorList>
            <person name="Jeon S.J."/>
            <person name="Ishikawa K."/>
        </authorList>
    </citation>
    <scope>CATALYTIC ACTIVITY</scope>
    <scope>FUNCTION</scope>
    <scope>SUBCELLULAR LOCATION</scope>
    <scope>INDUCTION BY HYDROGEN PEROXIDE</scope>
    <scope>DISULFIDE BOND</scope>
    <scope>MUTAGENESIS OF CYS-50; CYS-207 AND CYS-213</scope>
    <source>
        <strain>ATCC 700893 / DSM 11879 / JCM 9820 / NBRC 100138 / K1</strain>
    </source>
</reference>
<reference key="3">
    <citation type="journal article" date="2005" name="J. Mol. Biol.">
        <title>Crystal structure of an archaeal peroxiredoxin from the aerobic hyperthermophilic crenarchaeon Aeropyrum pernix K1.</title>
        <authorList>
            <person name="Mizohata E."/>
            <person name="Sakai H."/>
            <person name="Fusatomi E."/>
            <person name="Terada T."/>
            <person name="Murayama K."/>
            <person name="Shirouzu M."/>
            <person name="Yokoyama S."/>
        </authorList>
    </citation>
    <scope>X-RAY CRYSTALLOGRAPHY (2.30 ANGSTROMS)</scope>
    <scope>ACTIVE SITE</scope>
    <scope>DISULFIDE BOND</scope>
    <scope>SUBUNIT</scope>
    <source>
        <strain>ATCC 700893 / DSM 11879 / JCM 9820 / NBRC 100138 / K1</strain>
    </source>
</reference>
<reference key="4">
    <citation type="journal article" date="2006" name="Proteins">
        <title>Crystal structure of thioredoxin peroxidase from aerobic hyperthermophilic archaeon Aeropyrum pernix K1.</title>
        <authorList>
            <person name="Nakamura T."/>
            <person name="Yamamoto T."/>
            <person name="Inoue T."/>
            <person name="Matsumura H."/>
            <person name="Kobayashi A."/>
            <person name="Hagihara Y."/>
            <person name="Uegaki K."/>
            <person name="Ataka M."/>
            <person name="Kai Y."/>
            <person name="Ishikawa K."/>
        </authorList>
    </citation>
    <scope>X-RAY CRYSTALLOGRAPHY (2.00 ANGSTROMS) OF MUTANT SER-207</scope>
    <scope>SUBUNIT</scope>
    <source>
        <strain>ATCC 700893 / DSM 11879 / JCM 9820 / NBRC 100138 / K1</strain>
    </source>
</reference>
<reference key="5">
    <citation type="journal article" date="2008" name="Proc. Natl. Acad. Sci. U.S.A.">
        <title>Oxidation of archaeal peroxiredoxin involves a hypervalent sulfur intermediate.</title>
        <authorList>
            <person name="Nakamura T."/>
            <person name="Yamamoto T."/>
            <person name="Abe M."/>
            <person name="Matsumura H."/>
            <person name="Hagihara Y."/>
            <person name="Goto T."/>
            <person name="Yamaguchi T."/>
            <person name="Inoue T."/>
        </authorList>
    </citation>
    <scope>X-RAY CRYSTALLOGRAPHY (1.70 ANGSTROMS)</scope>
    <scope>ACTIVE SITE</scope>
</reference>
<reference key="6">
    <citation type="journal article" date="2010" name="J. Biochem.">
        <title>Crystal structure of peroxiredoxin from Aeropyrum pernix K1 complexed with its substrate, hydrogen peroxide.</title>
        <authorList>
            <person name="Nakamura T."/>
            <person name="Kado Y."/>
            <person name="Yamaguchi T."/>
            <person name="Matsumura H."/>
            <person name="Ishikawa K."/>
            <person name="Inoue T."/>
        </authorList>
    </citation>
    <scope>X-RAY CRYSTALLOGRAPHY (1.65 ANGSTROMS) OF WILD-TYPE AND MUTANTS SER-50 AND SER-207 IN COMPLEX WITH HYDROGEN PEROXIDE</scope>
    <scope>DISULFIDE BOND</scope>
    <source>
        <strain>ATCC 700893 / DSM 11879 / JCM 9820 / NBRC 100138 / K1</strain>
    </source>
</reference>
<dbReference type="EC" id="1.11.1.24" evidence="1 2"/>
<dbReference type="EMBL" id="BA000002">
    <property type="protein sequence ID" value="BAA81290.1"/>
    <property type="molecule type" value="Genomic_DNA"/>
</dbReference>
<dbReference type="PIR" id="B72454">
    <property type="entry name" value="B72454"/>
</dbReference>
<dbReference type="RefSeq" id="WP_010866908.1">
    <property type="nucleotide sequence ID" value="NC_000854.2"/>
</dbReference>
<dbReference type="PDB" id="1X0R">
    <property type="method" value="X-ray"/>
    <property type="resolution" value="2.00 A"/>
    <property type="chains" value="A/B/C/D/E/F/G/H/I/J=2-250"/>
</dbReference>
<dbReference type="PDB" id="2CV4">
    <property type="method" value="X-ray"/>
    <property type="resolution" value="2.30 A"/>
    <property type="chains" value="A/B/C/D/E/F/G/H/I/J=1-250"/>
</dbReference>
<dbReference type="PDB" id="2E2G">
    <property type="method" value="X-ray"/>
    <property type="resolution" value="2.40 A"/>
    <property type="chains" value="A/B/C/D/E/F/G/H/I/J=1-250"/>
</dbReference>
<dbReference type="PDB" id="2E2M">
    <property type="method" value="X-ray"/>
    <property type="resolution" value="2.60 A"/>
    <property type="chains" value="A/B/C/D/E/F/G/H/I/J=1-250"/>
</dbReference>
<dbReference type="PDB" id="2NVL">
    <property type="method" value="X-ray"/>
    <property type="resolution" value="2.36 A"/>
    <property type="chains" value="A/B/C/D/E/F/G/H/I/J=1-250"/>
</dbReference>
<dbReference type="PDB" id="2ZCT">
    <property type="method" value="X-ray"/>
    <property type="resolution" value="1.70 A"/>
    <property type="chains" value="A/B/C/D/E/F/G/H/I/J=2-250"/>
</dbReference>
<dbReference type="PDB" id="3A2V">
    <property type="method" value="X-ray"/>
    <property type="resolution" value="1.65 A"/>
    <property type="chains" value="A/B/C/D/E/F/G/H/I/J=2-250"/>
</dbReference>
<dbReference type="PDB" id="3A2W">
    <property type="method" value="X-ray"/>
    <property type="resolution" value="2.30 A"/>
    <property type="chains" value="A/B/C/D/E/F/G/H/I/J=2-250"/>
</dbReference>
<dbReference type="PDB" id="3A2X">
    <property type="method" value="X-ray"/>
    <property type="resolution" value="1.90 A"/>
    <property type="chains" value="A/B/C/D/E/F/G/H/I/J=2-250"/>
</dbReference>
<dbReference type="PDB" id="3A5W">
    <property type="method" value="X-ray"/>
    <property type="resolution" value="2.20 A"/>
    <property type="chains" value="A/B/C/D/E/F/G/H/I/J=2-250"/>
</dbReference>
<dbReference type="PDB" id="5XBS">
    <property type="method" value="X-ray"/>
    <property type="resolution" value="2.51 A"/>
    <property type="chains" value="A/B/C/D=1-250"/>
</dbReference>
<dbReference type="PDB" id="6KRK">
    <property type="method" value="X-ray"/>
    <property type="resolution" value="1.80 A"/>
    <property type="chains" value="A/B/C/D/E/F/G/H/I/J=1-250"/>
</dbReference>
<dbReference type="PDB" id="6KRM">
    <property type="method" value="X-ray"/>
    <property type="resolution" value="1.80 A"/>
    <property type="chains" value="A/B/C/D/E/F/G/H/I/J=1-250"/>
</dbReference>
<dbReference type="PDB" id="6KRP">
    <property type="method" value="X-ray"/>
    <property type="resolution" value="1.89 A"/>
    <property type="chains" value="A/B/C/D/E/F/G/H/I/J=1-250"/>
</dbReference>
<dbReference type="PDB" id="6KRQ">
    <property type="method" value="X-ray"/>
    <property type="resolution" value="2.10 A"/>
    <property type="chains" value="A/B/C/D/E/F/G/H/I/J=2-245"/>
</dbReference>
<dbReference type="PDB" id="6KRR">
    <property type="method" value="X-ray"/>
    <property type="resolution" value="2.15 A"/>
    <property type="chains" value="A/B/C/D=2-245"/>
</dbReference>
<dbReference type="PDB" id="6KRS">
    <property type="method" value="X-ray"/>
    <property type="resolution" value="2.30 A"/>
    <property type="chains" value="A/B/C/D/E/F/G/H/I/J=4-245"/>
</dbReference>
<dbReference type="PDB" id="7C87">
    <property type="method" value="X-ray"/>
    <property type="resolution" value="2.20 A"/>
    <property type="chains" value="A/B/C/D/E/F/G/H/I/J=1-250"/>
</dbReference>
<dbReference type="PDB" id="7C89">
    <property type="method" value="X-ray"/>
    <property type="resolution" value="2.10 A"/>
    <property type="chains" value="A/B/C/D/E/F/G/H/I/J=1-250"/>
</dbReference>
<dbReference type="PDB" id="7C8A">
    <property type="method" value="X-ray"/>
    <property type="resolution" value="2.10 A"/>
    <property type="chains" value="A/B/C/D/E/F/G/H/I/J=1-250"/>
</dbReference>
<dbReference type="PDB" id="7CQJ">
    <property type="method" value="X-ray"/>
    <property type="resolution" value="2.90 A"/>
    <property type="chains" value="A/B/C/D/E/F/G/H/I/J/K/L=1-250"/>
</dbReference>
<dbReference type="PDBsum" id="1X0R"/>
<dbReference type="PDBsum" id="2CV4"/>
<dbReference type="PDBsum" id="2E2G"/>
<dbReference type="PDBsum" id="2E2M"/>
<dbReference type="PDBsum" id="2NVL"/>
<dbReference type="PDBsum" id="2ZCT"/>
<dbReference type="PDBsum" id="3A2V"/>
<dbReference type="PDBsum" id="3A2W"/>
<dbReference type="PDBsum" id="3A2X"/>
<dbReference type="PDBsum" id="3A5W"/>
<dbReference type="PDBsum" id="5XBS"/>
<dbReference type="PDBsum" id="6KRK"/>
<dbReference type="PDBsum" id="6KRM"/>
<dbReference type="PDBsum" id="6KRP"/>
<dbReference type="PDBsum" id="6KRQ"/>
<dbReference type="PDBsum" id="6KRR"/>
<dbReference type="PDBsum" id="6KRS"/>
<dbReference type="PDBsum" id="7C87"/>
<dbReference type="PDBsum" id="7C89"/>
<dbReference type="PDBsum" id="7C8A"/>
<dbReference type="PDBsum" id="7CQJ"/>
<dbReference type="SMR" id="Q9Y9L0"/>
<dbReference type="DIP" id="DIP-29934N"/>
<dbReference type="STRING" id="272557.APE_2278"/>
<dbReference type="EnsemblBacteria" id="BAA81290">
    <property type="protein sequence ID" value="BAA81290"/>
    <property type="gene ID" value="APE_2278"/>
</dbReference>
<dbReference type="GeneID" id="1445316"/>
<dbReference type="KEGG" id="ape:APE_2278"/>
<dbReference type="PATRIC" id="fig|272557.25.peg.1519"/>
<dbReference type="eggNOG" id="arCOG00312">
    <property type="taxonomic scope" value="Archaea"/>
</dbReference>
<dbReference type="BRENDA" id="1.11.1.24">
    <property type="organism ID" value="171"/>
</dbReference>
<dbReference type="EvolutionaryTrace" id="Q9Y9L0"/>
<dbReference type="Proteomes" id="UP000002518">
    <property type="component" value="Chromosome"/>
</dbReference>
<dbReference type="GO" id="GO:0005829">
    <property type="term" value="C:cytosol"/>
    <property type="evidence" value="ECO:0007669"/>
    <property type="project" value="TreeGrafter"/>
</dbReference>
<dbReference type="GO" id="GO:0016209">
    <property type="term" value="F:antioxidant activity"/>
    <property type="evidence" value="ECO:0000314"/>
    <property type="project" value="UniProtKB"/>
</dbReference>
<dbReference type="GO" id="GO:0042802">
    <property type="term" value="F:identical protein binding"/>
    <property type="evidence" value="ECO:0000353"/>
    <property type="project" value="IntAct"/>
</dbReference>
<dbReference type="GO" id="GO:0051920">
    <property type="term" value="F:peroxiredoxin activity"/>
    <property type="evidence" value="ECO:0000314"/>
    <property type="project" value="UniProtKB"/>
</dbReference>
<dbReference type="GO" id="GO:0008379">
    <property type="term" value="F:thioredoxin peroxidase activity"/>
    <property type="evidence" value="ECO:0007669"/>
    <property type="project" value="TreeGrafter"/>
</dbReference>
<dbReference type="GO" id="GO:0045454">
    <property type="term" value="P:cell redox homeostasis"/>
    <property type="evidence" value="ECO:0007669"/>
    <property type="project" value="TreeGrafter"/>
</dbReference>
<dbReference type="GO" id="GO:0070301">
    <property type="term" value="P:cellular response to hydrogen peroxide"/>
    <property type="evidence" value="ECO:0000314"/>
    <property type="project" value="UniProtKB"/>
</dbReference>
<dbReference type="GO" id="GO:0042744">
    <property type="term" value="P:hydrogen peroxide catabolic process"/>
    <property type="evidence" value="ECO:0007669"/>
    <property type="project" value="TreeGrafter"/>
</dbReference>
<dbReference type="CDD" id="cd03016">
    <property type="entry name" value="PRX_1cys"/>
    <property type="match status" value="1"/>
</dbReference>
<dbReference type="FunFam" id="3.40.30.10:FF:000011">
    <property type="entry name" value="Peroxiredoxin PRX1"/>
    <property type="match status" value="1"/>
</dbReference>
<dbReference type="Gene3D" id="3.30.1020.10">
    <property type="entry name" value="Antioxidant, Horf6, Chain A, domain2"/>
    <property type="match status" value="1"/>
</dbReference>
<dbReference type="Gene3D" id="3.40.30.10">
    <property type="entry name" value="Glutaredoxin"/>
    <property type="match status" value="1"/>
</dbReference>
<dbReference type="HAMAP" id="MF_00401">
    <property type="entry name" value="Peroxiredoxin"/>
    <property type="match status" value="1"/>
</dbReference>
<dbReference type="InterPro" id="IPR000866">
    <property type="entry name" value="AhpC/TSA"/>
</dbReference>
<dbReference type="InterPro" id="IPR050217">
    <property type="entry name" value="Peroxiredoxin"/>
</dbReference>
<dbReference type="InterPro" id="IPR024706">
    <property type="entry name" value="Peroxiredoxin_AhpC-typ"/>
</dbReference>
<dbReference type="InterPro" id="IPR019479">
    <property type="entry name" value="Peroxiredoxin_C"/>
</dbReference>
<dbReference type="InterPro" id="IPR022915">
    <property type="entry name" value="Peroxiredoxin_TDXH"/>
</dbReference>
<dbReference type="InterPro" id="IPR045020">
    <property type="entry name" value="PRX_1cys"/>
</dbReference>
<dbReference type="InterPro" id="IPR036249">
    <property type="entry name" value="Thioredoxin-like_sf"/>
</dbReference>
<dbReference type="InterPro" id="IPR013766">
    <property type="entry name" value="Thioredoxin_domain"/>
</dbReference>
<dbReference type="NCBIfam" id="NF009668">
    <property type="entry name" value="PRK13189.1"/>
    <property type="match status" value="1"/>
</dbReference>
<dbReference type="PANTHER" id="PTHR10681:SF121">
    <property type="entry name" value="ALKYL HYDROPEROXIDE REDUCTASE C"/>
    <property type="match status" value="1"/>
</dbReference>
<dbReference type="PANTHER" id="PTHR10681">
    <property type="entry name" value="THIOREDOXIN PEROXIDASE"/>
    <property type="match status" value="1"/>
</dbReference>
<dbReference type="Pfam" id="PF10417">
    <property type="entry name" value="1-cysPrx_C"/>
    <property type="match status" value="1"/>
</dbReference>
<dbReference type="Pfam" id="PF00578">
    <property type="entry name" value="AhpC-TSA"/>
    <property type="match status" value="1"/>
</dbReference>
<dbReference type="PIRSF" id="PIRSF000239">
    <property type="entry name" value="AHPC"/>
    <property type="match status" value="1"/>
</dbReference>
<dbReference type="SUPFAM" id="SSF52833">
    <property type="entry name" value="Thioredoxin-like"/>
    <property type="match status" value="1"/>
</dbReference>
<dbReference type="PROSITE" id="PS51352">
    <property type="entry name" value="THIOREDOXIN_2"/>
    <property type="match status" value="1"/>
</dbReference>
<protein>
    <recommendedName>
        <fullName evidence="1">Peroxiredoxin</fullName>
        <ecNumber evidence="1 2">1.11.1.24</ecNumber>
    </recommendedName>
    <alternativeName>
        <fullName evidence="1">Thioredoxin peroxidase</fullName>
        <shortName>ApTPx</shortName>
    </alternativeName>
    <alternativeName>
        <fullName evidence="1">Thioredoxin-dependent peroxiredoxin</fullName>
    </alternativeName>
</protein>
<comment type="function">
    <text evidence="1 2">Thiol-specific peroxidase that catalyzes the reduction of hydrogen peroxide and organic hydroperoxides to water and alcohols, respectively. Plays a role in cell protection against oxidative stress by detoxifying peroxides.</text>
</comment>
<comment type="catalytic activity">
    <reaction evidence="1 2">
        <text>a hydroperoxide + [thioredoxin]-dithiol = an alcohol + [thioredoxin]-disulfide + H2O</text>
        <dbReference type="Rhea" id="RHEA:62620"/>
        <dbReference type="Rhea" id="RHEA-COMP:10698"/>
        <dbReference type="Rhea" id="RHEA-COMP:10700"/>
        <dbReference type="ChEBI" id="CHEBI:15377"/>
        <dbReference type="ChEBI" id="CHEBI:29950"/>
        <dbReference type="ChEBI" id="CHEBI:30879"/>
        <dbReference type="ChEBI" id="CHEBI:35924"/>
        <dbReference type="ChEBI" id="CHEBI:50058"/>
        <dbReference type="EC" id="1.11.1.24"/>
    </reaction>
</comment>
<comment type="subunit">
    <text evidence="1 3 4 6">Homodecamer. Pentamer of dimers that assemble into a ring structure.</text>
</comment>
<comment type="interaction">
    <interactant intactId="EBI-15699349">
        <id>Q9Y9L0</id>
    </interactant>
    <interactant intactId="EBI-15699349">
        <id>Q9Y9L0</id>
        <label>APE_2278</label>
    </interactant>
    <organismsDiffer>false</organismsDiffer>
    <experiments>2</experiments>
</comment>
<comment type="subcellular location">
    <subcellularLocation>
        <location evidence="1 2">Cytoplasm</location>
    </subcellularLocation>
</comment>
<comment type="induction">
    <text evidence="2">Up-regulated by hydrogen peroxide (at protein level).</text>
</comment>
<comment type="miscellaneous">
    <text evidence="1 8 9">The active site is a conserved redox-active cysteine residue, the peroxidatic cysteine (C(P)), which makes the nucleophilic attack on the peroxide substrate. The peroxide oxidizes the C(P)-SH to cysteine sulfenic acid (C(P)-SOH), which then reacts with another cysteine residue, the resolving cysteine (C(R)), to form a disulfide bridge. The disulfide is subsequently reduced by an appropriate electron donor to complete the catalytic cycle. Although the primary sequence of this enzyme is similar to those of the 1-Cys Prx6 enzymes, its catalytic properties resemble those of the typical 2-Cys Prxs and C(R) is provided by the other dimeric subunit to form an intersubunit disulfide. The disulfide is subsequently reduced by thioredoxin.</text>
</comment>
<comment type="similarity">
    <text evidence="1 7">Belongs to the peroxiredoxin family. Prx6 subfamily.</text>
</comment>
<sequence>MPGSIPLIGERFPEMEVTTDHGVIKLPDHYVSQGKWFVLFSHPADFTPVCTTEFVSFARRYEDFQRLGVDLIGLSVDSVFSHIKWKEWIERHIGVRIPFPIIADPQGTVARRLGLLHAESATHTVRGVFIVDARGVIRTMLYYPMELGRLVDEILRIVKALKLGDSLKRAVPADWPNNEIIGEGLIVPPPTTEDQARARMESGQYRCLDWWFCWDTPASRDDVEEARRYLRRAAEKPAKLLYEEARTHLH</sequence>
<gene>
    <name type="ordered locus">APE_2278</name>
</gene>
<evidence type="ECO:0000255" key="1">
    <source>
        <dbReference type="HAMAP-Rule" id="MF_00401"/>
    </source>
</evidence>
<evidence type="ECO:0000269" key="2">
    <source>
    </source>
</evidence>
<evidence type="ECO:0000269" key="3">
    <source>
    </source>
</evidence>
<evidence type="ECO:0000269" key="4">
    <source>
    </source>
</evidence>
<evidence type="ECO:0000269" key="5">
    <source>
    </source>
</evidence>
<evidence type="ECO:0000269" key="6">
    <source>
    </source>
</evidence>
<evidence type="ECO:0000305" key="7"/>
<evidence type="ECO:0000305" key="8">
    <source>
    </source>
</evidence>
<evidence type="ECO:0000305" key="9">
    <source>
    </source>
</evidence>
<evidence type="ECO:0007829" key="10">
    <source>
        <dbReference type="PDB" id="2NVL"/>
    </source>
</evidence>
<evidence type="ECO:0007829" key="11">
    <source>
        <dbReference type="PDB" id="2ZCT"/>
    </source>
</evidence>
<evidence type="ECO:0007829" key="12">
    <source>
        <dbReference type="PDB" id="3A2V"/>
    </source>
</evidence>
<feature type="chain" id="PRO_0000135153" description="Peroxiredoxin">
    <location>
        <begin position="1"/>
        <end position="250"/>
    </location>
</feature>
<feature type="domain" description="Thioredoxin" evidence="1">
    <location>
        <begin position="6"/>
        <end position="163"/>
    </location>
</feature>
<feature type="active site" description="Cysteine sulfenic acid (-SOH) intermediate" evidence="1 3 5">
    <location>
        <position position="50"/>
    </location>
</feature>
<feature type="binding site" evidence="1 6">
    <location>
        <position position="126"/>
    </location>
    <ligand>
        <name>substrate</name>
    </ligand>
</feature>
<feature type="disulfide bond" description="Interchain (with C-213); in linked form" evidence="1 8 9">
    <location>
        <position position="50"/>
    </location>
</feature>
<feature type="disulfide bond" description="Alternate" evidence="1 3 6">
    <location>
        <begin position="207"/>
        <end position="213"/>
    </location>
</feature>
<feature type="disulfide bond" description="Interchain (with C-50); in linked form" evidence="1 8 9">
    <location>
        <position position="213"/>
    </location>
</feature>
<feature type="mutagenesis site" description="Abolishes enzyme activity." evidence="2">
    <original>C</original>
    <variation>S</variation>
    <location>
        <position position="50"/>
    </location>
</feature>
<feature type="mutagenesis site" description="Reduces enzyme activity." evidence="2">
    <original>C</original>
    <variation>S</variation>
    <location>
        <position position="207"/>
    </location>
</feature>
<feature type="mutagenesis site" description="Abolishes enzyme activity." evidence="2">
    <original>C</original>
    <variation>S</variation>
    <location>
        <position position="213"/>
    </location>
</feature>
<feature type="strand" evidence="12">
    <location>
        <begin position="3"/>
        <end position="5"/>
    </location>
</feature>
<feature type="strand" evidence="12">
    <location>
        <begin position="15"/>
        <end position="19"/>
    </location>
</feature>
<feature type="strand" evidence="12">
    <location>
        <begin position="22"/>
        <end position="26"/>
    </location>
</feature>
<feature type="helix" evidence="12">
    <location>
        <begin position="28"/>
        <end position="31"/>
    </location>
</feature>
<feature type="turn" evidence="12">
    <location>
        <begin position="32"/>
        <end position="34"/>
    </location>
</feature>
<feature type="strand" evidence="12">
    <location>
        <begin position="36"/>
        <end position="40"/>
    </location>
</feature>
<feature type="helix" evidence="12">
    <location>
        <begin position="48"/>
        <end position="59"/>
    </location>
</feature>
<feature type="helix" evidence="12">
    <location>
        <begin position="61"/>
        <end position="66"/>
    </location>
</feature>
<feature type="strand" evidence="12">
    <location>
        <begin position="69"/>
        <end position="77"/>
    </location>
</feature>
<feature type="helix" evidence="12">
    <location>
        <begin position="79"/>
        <end position="92"/>
    </location>
</feature>
<feature type="strand" evidence="12">
    <location>
        <begin position="101"/>
        <end position="103"/>
    </location>
</feature>
<feature type="helix" evidence="11">
    <location>
        <begin position="105"/>
        <end position="107"/>
    </location>
</feature>
<feature type="helix" evidence="12">
    <location>
        <begin position="108"/>
        <end position="113"/>
    </location>
</feature>
<feature type="turn" evidence="10">
    <location>
        <begin position="118"/>
        <end position="120"/>
    </location>
</feature>
<feature type="strand" evidence="12">
    <location>
        <begin position="121"/>
        <end position="123"/>
    </location>
</feature>
<feature type="strand" evidence="12">
    <location>
        <begin position="126"/>
        <end position="131"/>
    </location>
</feature>
<feature type="strand" evidence="12">
    <location>
        <begin position="135"/>
        <end position="143"/>
    </location>
</feature>
<feature type="helix" evidence="12">
    <location>
        <begin position="151"/>
        <end position="167"/>
    </location>
</feature>
<feature type="turn" evidence="12">
    <location>
        <begin position="173"/>
        <end position="176"/>
    </location>
</feature>
<feature type="turn" evidence="12">
    <location>
        <begin position="179"/>
        <end position="181"/>
    </location>
</feature>
<feature type="strand" evidence="12">
    <location>
        <begin position="185"/>
        <end position="187"/>
    </location>
</feature>
<feature type="helix" evidence="12">
    <location>
        <begin position="193"/>
        <end position="202"/>
    </location>
</feature>
<feature type="strand" evidence="12">
    <location>
        <begin position="205"/>
        <end position="209"/>
    </location>
</feature>
<feature type="strand" evidence="12">
    <location>
        <begin position="212"/>
        <end position="215"/>
    </location>
</feature>
<feature type="helix" evidence="12">
    <location>
        <begin position="220"/>
        <end position="234"/>
    </location>
</feature>
<feature type="helix" evidence="12">
    <location>
        <begin position="241"/>
        <end position="243"/>
    </location>
</feature>